<proteinExistence type="inferred from homology"/>
<dbReference type="EC" id="2.5.1.78" evidence="1"/>
<dbReference type="EMBL" id="AJ564299">
    <property type="protein sequence ID" value="CAD91961.1"/>
    <property type="molecule type" value="Genomic_DNA"/>
</dbReference>
<dbReference type="EMBL" id="BA000017">
    <property type="protein sequence ID" value="BAB57929.2"/>
    <property type="molecule type" value="Genomic_DNA"/>
</dbReference>
<dbReference type="SMR" id="P61595"/>
<dbReference type="KEGG" id="sav:SAV1767"/>
<dbReference type="HOGENOM" id="CLU_089358_1_1_9"/>
<dbReference type="PhylomeDB" id="P61595"/>
<dbReference type="UniPathway" id="UPA00275">
    <property type="reaction ID" value="UER00404"/>
</dbReference>
<dbReference type="Proteomes" id="UP000002481">
    <property type="component" value="Chromosome"/>
</dbReference>
<dbReference type="GO" id="GO:0005829">
    <property type="term" value="C:cytosol"/>
    <property type="evidence" value="ECO:0007669"/>
    <property type="project" value="TreeGrafter"/>
</dbReference>
<dbReference type="GO" id="GO:0009349">
    <property type="term" value="C:riboflavin synthase complex"/>
    <property type="evidence" value="ECO:0007669"/>
    <property type="project" value="InterPro"/>
</dbReference>
<dbReference type="GO" id="GO:0000906">
    <property type="term" value="F:6,7-dimethyl-8-ribityllumazine synthase activity"/>
    <property type="evidence" value="ECO:0007669"/>
    <property type="project" value="UniProtKB-UniRule"/>
</dbReference>
<dbReference type="GO" id="GO:0009231">
    <property type="term" value="P:riboflavin biosynthetic process"/>
    <property type="evidence" value="ECO:0007669"/>
    <property type="project" value="UniProtKB-UniRule"/>
</dbReference>
<dbReference type="CDD" id="cd09209">
    <property type="entry name" value="Lumazine_synthase-I"/>
    <property type="match status" value="1"/>
</dbReference>
<dbReference type="FunFam" id="3.40.50.960:FF:000001">
    <property type="entry name" value="6,7-dimethyl-8-ribityllumazine synthase"/>
    <property type="match status" value="1"/>
</dbReference>
<dbReference type="Gene3D" id="3.40.50.960">
    <property type="entry name" value="Lumazine/riboflavin synthase"/>
    <property type="match status" value="1"/>
</dbReference>
<dbReference type="HAMAP" id="MF_00178">
    <property type="entry name" value="Lumazine_synth"/>
    <property type="match status" value="1"/>
</dbReference>
<dbReference type="InterPro" id="IPR034964">
    <property type="entry name" value="LS"/>
</dbReference>
<dbReference type="InterPro" id="IPR002180">
    <property type="entry name" value="LS/RS"/>
</dbReference>
<dbReference type="InterPro" id="IPR036467">
    <property type="entry name" value="LS/RS_sf"/>
</dbReference>
<dbReference type="NCBIfam" id="TIGR00114">
    <property type="entry name" value="lumazine-synth"/>
    <property type="match status" value="1"/>
</dbReference>
<dbReference type="NCBIfam" id="NF000812">
    <property type="entry name" value="PRK00061.1-4"/>
    <property type="match status" value="1"/>
</dbReference>
<dbReference type="PANTHER" id="PTHR21058:SF0">
    <property type="entry name" value="6,7-DIMETHYL-8-RIBITYLLUMAZINE SYNTHASE"/>
    <property type="match status" value="1"/>
</dbReference>
<dbReference type="PANTHER" id="PTHR21058">
    <property type="entry name" value="6,7-DIMETHYL-8-RIBITYLLUMAZINE SYNTHASE DMRL SYNTHASE LUMAZINE SYNTHASE"/>
    <property type="match status" value="1"/>
</dbReference>
<dbReference type="Pfam" id="PF00885">
    <property type="entry name" value="DMRL_synthase"/>
    <property type="match status" value="1"/>
</dbReference>
<dbReference type="SUPFAM" id="SSF52121">
    <property type="entry name" value="Lumazine synthase"/>
    <property type="match status" value="1"/>
</dbReference>
<comment type="function">
    <text evidence="1">Catalyzes the formation of 6,7-dimethyl-8-ribityllumazine by condensation of 5-amino-6-(D-ribitylamino)uracil with 3,4-dihydroxy-2-butanone 4-phosphate. This is the penultimate step in the biosynthesis of riboflavin.</text>
</comment>
<comment type="catalytic activity">
    <reaction evidence="1">
        <text>(2S)-2-hydroxy-3-oxobutyl phosphate + 5-amino-6-(D-ribitylamino)uracil = 6,7-dimethyl-8-(1-D-ribityl)lumazine + phosphate + 2 H2O + H(+)</text>
        <dbReference type="Rhea" id="RHEA:26152"/>
        <dbReference type="ChEBI" id="CHEBI:15377"/>
        <dbReference type="ChEBI" id="CHEBI:15378"/>
        <dbReference type="ChEBI" id="CHEBI:15934"/>
        <dbReference type="ChEBI" id="CHEBI:43474"/>
        <dbReference type="ChEBI" id="CHEBI:58201"/>
        <dbReference type="ChEBI" id="CHEBI:58830"/>
        <dbReference type="EC" id="2.5.1.78"/>
    </reaction>
</comment>
<comment type="pathway">
    <text evidence="1">Cofactor biosynthesis; riboflavin biosynthesis; riboflavin from 2-hydroxy-3-oxobutyl phosphate and 5-amino-6-(D-ribitylamino)uracil: step 1/2.</text>
</comment>
<comment type="subunit">
    <text evidence="1">Forms an icosahedral capsid composed of 60 subunits, arranged as a dodecamer of pentamers.</text>
</comment>
<comment type="similarity">
    <text evidence="1">Belongs to the DMRL synthase family.</text>
</comment>
<reference key="1">
    <citation type="journal article" date="2004" name="J. Antimicrob. Chemother.">
        <title>Genetic analysis of 17 genes in Staphylococcus aureus with reduced susceptibility to vancomycin (VISA) and heteroVISA.</title>
        <authorList>
            <person name="Wootton M."/>
            <person name="Avison M.B."/>
            <person name="Bennett P.M."/>
            <person name="Howe R.A."/>
            <person name="MacGowan A.P."/>
            <person name="Walsh T.R."/>
        </authorList>
    </citation>
    <scope>NUCLEOTIDE SEQUENCE [GENOMIC DNA]</scope>
</reference>
<reference key="2">
    <citation type="journal article" date="2001" name="Lancet">
        <title>Whole genome sequencing of meticillin-resistant Staphylococcus aureus.</title>
        <authorList>
            <person name="Kuroda M."/>
            <person name="Ohta T."/>
            <person name="Uchiyama I."/>
            <person name="Baba T."/>
            <person name="Yuzawa H."/>
            <person name="Kobayashi I."/>
            <person name="Cui L."/>
            <person name="Oguchi A."/>
            <person name="Aoki K."/>
            <person name="Nagai Y."/>
            <person name="Lian J.-Q."/>
            <person name="Ito T."/>
            <person name="Kanamori M."/>
            <person name="Matsumaru H."/>
            <person name="Maruyama A."/>
            <person name="Murakami H."/>
            <person name="Hosoyama A."/>
            <person name="Mizutani-Ui Y."/>
            <person name="Takahashi N.K."/>
            <person name="Sawano T."/>
            <person name="Inoue R."/>
            <person name="Kaito C."/>
            <person name="Sekimizu K."/>
            <person name="Hirakawa H."/>
            <person name="Kuhara S."/>
            <person name="Goto S."/>
            <person name="Yabuzaki J."/>
            <person name="Kanehisa M."/>
            <person name="Yamashita A."/>
            <person name="Oshima K."/>
            <person name="Furuya K."/>
            <person name="Yoshino C."/>
            <person name="Shiba T."/>
            <person name="Hattori M."/>
            <person name="Ogasawara N."/>
            <person name="Hayashi H."/>
            <person name="Hiramatsu K."/>
        </authorList>
    </citation>
    <scope>NUCLEOTIDE SEQUENCE [LARGE SCALE GENOMIC DNA]</scope>
    <source>
        <strain>Mu50 / ATCC 700699</strain>
    </source>
</reference>
<reference key="3">
    <citation type="journal article" date="2004" name="DNA Res.">
        <title>Nucleotide substitutions in Staphylococcus aureus strains, Mu50, Mu3, and N315.</title>
        <authorList>
            <person name="Ohta T."/>
            <person name="Hirakawa H."/>
            <person name="Morikawa K."/>
            <person name="Maruyama A."/>
            <person name="Inose Y."/>
            <person name="Yamashita A."/>
            <person name="Oshima K."/>
            <person name="Kuroda M."/>
            <person name="Hattori M."/>
            <person name="Hiramatsu K."/>
            <person name="Kuhara S."/>
            <person name="Hayashi H."/>
        </authorList>
    </citation>
    <scope>SEQUENCE REVISION</scope>
</reference>
<feature type="chain" id="PRO_0000134805" description="6,7-dimethyl-8-ribityllumazine synthase">
    <location>
        <begin position="1"/>
        <end position="154"/>
    </location>
</feature>
<feature type="active site" description="Proton donor" evidence="1">
    <location>
        <position position="87"/>
    </location>
</feature>
<feature type="binding site" evidence="1">
    <location>
        <position position="21"/>
    </location>
    <ligand>
        <name>5-amino-6-(D-ribitylamino)uracil</name>
        <dbReference type="ChEBI" id="CHEBI:15934"/>
    </ligand>
</feature>
<feature type="binding site" evidence="1">
    <location>
        <begin position="55"/>
        <end position="57"/>
    </location>
    <ligand>
        <name>5-amino-6-(D-ribitylamino)uracil</name>
        <dbReference type="ChEBI" id="CHEBI:15934"/>
    </ligand>
</feature>
<feature type="binding site" evidence="1">
    <location>
        <begin position="79"/>
        <end position="81"/>
    </location>
    <ligand>
        <name>5-amino-6-(D-ribitylamino)uracil</name>
        <dbReference type="ChEBI" id="CHEBI:15934"/>
    </ligand>
</feature>
<feature type="binding site" evidence="1">
    <location>
        <begin position="84"/>
        <end position="85"/>
    </location>
    <ligand>
        <name>(2S)-2-hydroxy-3-oxobutyl phosphate</name>
        <dbReference type="ChEBI" id="CHEBI:58830"/>
    </ligand>
</feature>
<feature type="binding site" evidence="1">
    <location>
        <position position="112"/>
    </location>
    <ligand>
        <name>5-amino-6-(D-ribitylamino)uracil</name>
        <dbReference type="ChEBI" id="CHEBI:15934"/>
    </ligand>
</feature>
<feature type="binding site" evidence="1">
    <location>
        <position position="126"/>
    </location>
    <ligand>
        <name>(2S)-2-hydroxy-3-oxobutyl phosphate</name>
        <dbReference type="ChEBI" id="CHEBI:58830"/>
    </ligand>
</feature>
<sequence length="154" mass="16410">MNFEGKLIGKDLKVAIVVSRFNDFITGRLLEGAKDTLIRHDVNEDNIDVAFVPGAFEIPLVAKKLASSGNYDAIITLGCVIRGATSHYDYVCNEVAKGVSKVNDQTNVPVIFGILTTESIEQAVERAGTKAGNKGAEAAVSAIEMANLLKSIKA</sequence>
<evidence type="ECO:0000255" key="1">
    <source>
        <dbReference type="HAMAP-Rule" id="MF_00178"/>
    </source>
</evidence>
<name>RISB_STAAM</name>
<accession>P61595</accession>
<accession>Q931N8</accession>
<accession>Q99TA1</accession>
<organism>
    <name type="scientific">Staphylococcus aureus (strain Mu50 / ATCC 700699)</name>
    <dbReference type="NCBI Taxonomy" id="158878"/>
    <lineage>
        <taxon>Bacteria</taxon>
        <taxon>Bacillati</taxon>
        <taxon>Bacillota</taxon>
        <taxon>Bacilli</taxon>
        <taxon>Bacillales</taxon>
        <taxon>Staphylococcaceae</taxon>
        <taxon>Staphylococcus</taxon>
    </lineage>
</organism>
<keyword id="KW-0686">Riboflavin biosynthesis</keyword>
<keyword id="KW-0808">Transferase</keyword>
<protein>
    <recommendedName>
        <fullName evidence="1">6,7-dimethyl-8-ribityllumazine synthase</fullName>
        <shortName evidence="1">DMRL synthase</shortName>
        <shortName evidence="1">LS</shortName>
        <shortName evidence="1">Lumazine synthase</shortName>
        <ecNumber evidence="1">2.5.1.78</ecNumber>
    </recommendedName>
</protein>
<gene>
    <name evidence="1" type="primary">ribH</name>
    <name type="ordered locus">SAV1767</name>
</gene>